<evidence type="ECO:0000250" key="1"/>
<evidence type="ECO:0000305" key="2"/>
<keyword id="KW-0507">mRNA processing</keyword>
<keyword id="KW-0508">mRNA splicing</keyword>
<keyword id="KW-0539">Nucleus</keyword>
<keyword id="KW-1185">Reference proteome</keyword>
<keyword id="KW-0687">Ribonucleoprotein</keyword>
<keyword id="KW-0690">Ribosome biogenesis</keyword>
<keyword id="KW-0694">RNA-binding</keyword>
<keyword id="KW-0698">rRNA processing</keyword>
<keyword id="KW-0747">Spliceosome</keyword>
<comment type="function">
    <text evidence="1">Common component of the spliceosome and rRNA processing machinery. In association with the spliceosomal U4/U6.U5 tri-snRNP particle, required for splicing of pre-mRNA. In association with box C/D snoRNPs, required for processing of pre-ribosomal RNA (rRNA) and site-specific 2'-O-methylation of substrate RNAs. Essential for the accumulation and stability of U4 snRNA, U6 snRNA, and box C/D snoRNAs (By similarity).</text>
</comment>
<comment type="subunit">
    <text evidence="1">Component of the U3 snoRNP particle. Binds to the C'/D and B/C motifs in U3 snoRNA. Component of the 25S U4/U6.U5 tri-snRNP particle, a subcomplex of the spliceosome. Binds to the 5' stem-loop of U4 snRNA (By similarity).</text>
</comment>
<comment type="subcellular location">
    <subcellularLocation>
        <location evidence="1">Nucleus</location>
        <location evidence="1">Nucleolus</location>
    </subcellularLocation>
</comment>
<comment type="similarity">
    <text evidence="2">Belongs to the eukaryotic ribosomal protein eL8 family.</text>
</comment>
<gene>
    <name type="primary">SNU13</name>
    <name type="ordered locus">DEHA2F11616g</name>
</gene>
<dbReference type="EMBL" id="CR382138">
    <property type="protein sequence ID" value="CAG89218.1"/>
    <property type="molecule type" value="Genomic_DNA"/>
</dbReference>
<dbReference type="RefSeq" id="XP_460868.1">
    <property type="nucleotide sequence ID" value="XM_460868.1"/>
</dbReference>
<dbReference type="SMR" id="Q6BLQ3"/>
<dbReference type="FunCoup" id="Q6BLQ3">
    <property type="interactions" value="1365"/>
</dbReference>
<dbReference type="STRING" id="284592.Q6BLQ3"/>
<dbReference type="GeneID" id="2903472"/>
<dbReference type="KEGG" id="dha:DEHA2F11616g"/>
<dbReference type="VEuPathDB" id="FungiDB:DEHA2F11616g"/>
<dbReference type="eggNOG" id="KOG3387">
    <property type="taxonomic scope" value="Eukaryota"/>
</dbReference>
<dbReference type="HOGENOM" id="CLU_084513_4_1_1"/>
<dbReference type="InParanoid" id="Q6BLQ3"/>
<dbReference type="OMA" id="IKNQIYA"/>
<dbReference type="OrthoDB" id="1924699at2759"/>
<dbReference type="Proteomes" id="UP000000599">
    <property type="component" value="Chromosome F"/>
</dbReference>
<dbReference type="GO" id="GO:0031428">
    <property type="term" value="C:box C/D methylation guide snoRNP complex"/>
    <property type="evidence" value="ECO:0007669"/>
    <property type="project" value="EnsemblFungi"/>
</dbReference>
<dbReference type="GO" id="GO:0005730">
    <property type="term" value="C:nucleolus"/>
    <property type="evidence" value="ECO:0007669"/>
    <property type="project" value="UniProtKB-SubCell"/>
</dbReference>
<dbReference type="GO" id="GO:0032040">
    <property type="term" value="C:small-subunit processome"/>
    <property type="evidence" value="ECO:0007669"/>
    <property type="project" value="EnsemblFungi"/>
</dbReference>
<dbReference type="GO" id="GO:0005681">
    <property type="term" value="C:spliceosomal complex"/>
    <property type="evidence" value="ECO:0007669"/>
    <property type="project" value="UniProtKB-KW"/>
</dbReference>
<dbReference type="GO" id="GO:0046540">
    <property type="term" value="C:U4/U6 x U5 tri-snRNP complex"/>
    <property type="evidence" value="ECO:0007669"/>
    <property type="project" value="EnsemblFungi"/>
</dbReference>
<dbReference type="GO" id="GO:0034511">
    <property type="term" value="F:U3 snoRNA binding"/>
    <property type="evidence" value="ECO:0007669"/>
    <property type="project" value="EnsemblFungi"/>
</dbReference>
<dbReference type="GO" id="GO:0030621">
    <property type="term" value="F:U4 snRNA binding"/>
    <property type="evidence" value="ECO:0007669"/>
    <property type="project" value="EnsemblFungi"/>
</dbReference>
<dbReference type="GO" id="GO:0000494">
    <property type="term" value="P:box C/D sno(s)RNA 3'-end processing"/>
    <property type="evidence" value="ECO:0007669"/>
    <property type="project" value="EnsemblFungi"/>
</dbReference>
<dbReference type="GO" id="GO:0000462">
    <property type="term" value="P:maturation of SSU-rRNA from tricistronic rRNA transcript (SSU-rRNA, 5.8S rRNA, LSU-rRNA)"/>
    <property type="evidence" value="ECO:0007669"/>
    <property type="project" value="EnsemblFungi"/>
</dbReference>
<dbReference type="GO" id="GO:0000398">
    <property type="term" value="P:mRNA splicing, via spliceosome"/>
    <property type="evidence" value="ECO:0007669"/>
    <property type="project" value="EnsemblFungi"/>
</dbReference>
<dbReference type="GO" id="GO:0000452">
    <property type="term" value="P:snoRNA guided rRNA 2'-O-methylation"/>
    <property type="evidence" value="ECO:0007669"/>
    <property type="project" value="EnsemblFungi"/>
</dbReference>
<dbReference type="CDD" id="cd21104">
    <property type="entry name" value="SNU13"/>
    <property type="match status" value="1"/>
</dbReference>
<dbReference type="FunFam" id="3.30.1330.30:FF:000002">
    <property type="entry name" value="NHP2-like protein 1 homolog"/>
    <property type="match status" value="1"/>
</dbReference>
<dbReference type="Gene3D" id="3.30.1330.30">
    <property type="match status" value="1"/>
</dbReference>
<dbReference type="InterPro" id="IPR050257">
    <property type="entry name" value="eL8/uL1-like"/>
</dbReference>
<dbReference type="InterPro" id="IPR002415">
    <property type="entry name" value="H/ACA_rnp_Nhp2-like"/>
</dbReference>
<dbReference type="InterPro" id="IPR029064">
    <property type="entry name" value="Ribosomal_eL30-like_sf"/>
</dbReference>
<dbReference type="InterPro" id="IPR004037">
    <property type="entry name" value="Ribosomal_eL8-like_CS"/>
</dbReference>
<dbReference type="InterPro" id="IPR004038">
    <property type="entry name" value="Ribosomal_eL8/eL30/eS12/Gad45"/>
</dbReference>
<dbReference type="InterPro" id="IPR018492">
    <property type="entry name" value="Ribosomal_eL8/Nhp2"/>
</dbReference>
<dbReference type="PANTHER" id="PTHR23105">
    <property type="entry name" value="RIBOSOMAL PROTEIN L7AE FAMILY MEMBER"/>
    <property type="match status" value="1"/>
</dbReference>
<dbReference type="Pfam" id="PF01248">
    <property type="entry name" value="Ribosomal_L7Ae"/>
    <property type="match status" value="1"/>
</dbReference>
<dbReference type="PRINTS" id="PR00881">
    <property type="entry name" value="L7ARS6FAMILY"/>
</dbReference>
<dbReference type="PRINTS" id="PR00883">
    <property type="entry name" value="NUCLEARHMG"/>
</dbReference>
<dbReference type="SUPFAM" id="SSF55315">
    <property type="entry name" value="L30e-like"/>
    <property type="match status" value="1"/>
</dbReference>
<dbReference type="PROSITE" id="PS01082">
    <property type="entry name" value="RIBOSOMAL_L7AE"/>
    <property type="match status" value="1"/>
</dbReference>
<name>SNU13_DEBHA</name>
<reference key="1">
    <citation type="journal article" date="2004" name="Nature">
        <title>Genome evolution in yeasts.</title>
        <authorList>
            <person name="Dujon B."/>
            <person name="Sherman D."/>
            <person name="Fischer G."/>
            <person name="Durrens P."/>
            <person name="Casaregola S."/>
            <person name="Lafontaine I."/>
            <person name="de Montigny J."/>
            <person name="Marck C."/>
            <person name="Neuveglise C."/>
            <person name="Talla E."/>
            <person name="Goffard N."/>
            <person name="Frangeul L."/>
            <person name="Aigle M."/>
            <person name="Anthouard V."/>
            <person name="Babour A."/>
            <person name="Barbe V."/>
            <person name="Barnay S."/>
            <person name="Blanchin S."/>
            <person name="Beckerich J.-M."/>
            <person name="Beyne E."/>
            <person name="Bleykasten C."/>
            <person name="Boisrame A."/>
            <person name="Boyer J."/>
            <person name="Cattolico L."/>
            <person name="Confanioleri F."/>
            <person name="de Daruvar A."/>
            <person name="Despons L."/>
            <person name="Fabre E."/>
            <person name="Fairhead C."/>
            <person name="Ferry-Dumazet H."/>
            <person name="Groppi A."/>
            <person name="Hantraye F."/>
            <person name="Hennequin C."/>
            <person name="Jauniaux N."/>
            <person name="Joyet P."/>
            <person name="Kachouri R."/>
            <person name="Kerrest A."/>
            <person name="Koszul R."/>
            <person name="Lemaire M."/>
            <person name="Lesur I."/>
            <person name="Ma L."/>
            <person name="Muller H."/>
            <person name="Nicaud J.-M."/>
            <person name="Nikolski M."/>
            <person name="Oztas S."/>
            <person name="Ozier-Kalogeropoulos O."/>
            <person name="Pellenz S."/>
            <person name="Potier S."/>
            <person name="Richard G.-F."/>
            <person name="Straub M.-L."/>
            <person name="Suleau A."/>
            <person name="Swennen D."/>
            <person name="Tekaia F."/>
            <person name="Wesolowski-Louvel M."/>
            <person name="Westhof E."/>
            <person name="Wirth B."/>
            <person name="Zeniou-Meyer M."/>
            <person name="Zivanovic Y."/>
            <person name="Bolotin-Fukuhara M."/>
            <person name="Thierry A."/>
            <person name="Bouchier C."/>
            <person name="Caudron B."/>
            <person name="Scarpelli C."/>
            <person name="Gaillardin C."/>
            <person name="Weissenbach J."/>
            <person name="Wincker P."/>
            <person name="Souciet J.-L."/>
        </authorList>
    </citation>
    <scope>NUCLEOTIDE SEQUENCE [LARGE SCALE GENOMIC DNA]</scope>
    <source>
        <strain>ATCC 36239 / CBS 767 / BCRC 21394 / JCM 1990 / NBRC 0083 / IGC 2968</strain>
    </source>
</reference>
<proteinExistence type="inferred from homology"/>
<sequence length="126" mass="13661">MSAPNPKAFPLADSALTQQILDVVQQSQNLRQLKKGANEATKTLNRGISEFIIMAADTEPIEILLHLPLLCEDKNVPYVFVPSKTALGRACGVSRPVIAASVTTNEASAMKNQIYGIKDKIETLLI</sequence>
<accession>Q6BLQ3</accession>
<protein>
    <recommendedName>
        <fullName>13 kDa ribonucleoprotein-associated protein</fullName>
    </recommendedName>
</protein>
<organism>
    <name type="scientific">Debaryomyces hansenii (strain ATCC 36239 / CBS 767 / BCRC 21394 / JCM 1990 / NBRC 0083 / IGC 2968)</name>
    <name type="common">Yeast</name>
    <name type="synonym">Torulaspora hansenii</name>
    <dbReference type="NCBI Taxonomy" id="284592"/>
    <lineage>
        <taxon>Eukaryota</taxon>
        <taxon>Fungi</taxon>
        <taxon>Dikarya</taxon>
        <taxon>Ascomycota</taxon>
        <taxon>Saccharomycotina</taxon>
        <taxon>Pichiomycetes</taxon>
        <taxon>Debaryomycetaceae</taxon>
        <taxon>Debaryomyces</taxon>
    </lineage>
</organism>
<feature type="chain" id="PRO_0000290660" description="13 kDa ribonucleoprotein-associated protein">
    <location>
        <begin position="1"/>
        <end position="126"/>
    </location>
</feature>